<keyword id="KW-0012">Acyltransferase</keyword>
<keyword id="KW-0963">Cytoplasm</keyword>
<keyword id="KW-0441">Lipid A biosynthesis</keyword>
<keyword id="KW-0444">Lipid biosynthesis</keyword>
<keyword id="KW-0443">Lipid metabolism</keyword>
<keyword id="KW-0677">Repeat</keyword>
<keyword id="KW-0808">Transferase</keyword>
<evidence type="ECO:0000255" key="1">
    <source>
        <dbReference type="HAMAP-Rule" id="MF_00387"/>
    </source>
</evidence>
<feature type="chain" id="PRO_1000013152" description="Acyl-[acyl-carrier-protein]--UDP-N-acetylglucosamine O-acyltransferase">
    <location>
        <begin position="1"/>
        <end position="262"/>
    </location>
</feature>
<reference key="1">
    <citation type="journal article" date="2010" name="Genome Biol. Evol.">
        <title>Continuing evolution of Burkholderia mallei through genome reduction and large-scale rearrangements.</title>
        <authorList>
            <person name="Losada L."/>
            <person name="Ronning C.M."/>
            <person name="DeShazer D."/>
            <person name="Woods D."/>
            <person name="Fedorova N."/>
            <person name="Kim H.S."/>
            <person name="Shabalina S.A."/>
            <person name="Pearson T.R."/>
            <person name="Brinkac L."/>
            <person name="Tan P."/>
            <person name="Nandi T."/>
            <person name="Crabtree J."/>
            <person name="Badger J."/>
            <person name="Beckstrom-Sternberg S."/>
            <person name="Saqib M."/>
            <person name="Schutzer S.E."/>
            <person name="Keim P."/>
            <person name="Nierman W.C."/>
        </authorList>
    </citation>
    <scope>NUCLEOTIDE SEQUENCE [LARGE SCALE GENOMIC DNA]</scope>
    <source>
        <strain>NCTC 10229</strain>
    </source>
</reference>
<dbReference type="EC" id="2.3.1.129" evidence="1"/>
<dbReference type="EMBL" id="CP000546">
    <property type="protein sequence ID" value="ABN02474.1"/>
    <property type="molecule type" value="Genomic_DNA"/>
</dbReference>
<dbReference type="RefSeq" id="WP_004193051.1">
    <property type="nucleotide sequence ID" value="NC_008836.1"/>
</dbReference>
<dbReference type="SMR" id="A2SB85"/>
<dbReference type="GeneID" id="93060688"/>
<dbReference type="KEGG" id="bml:BMA10229_A3268"/>
<dbReference type="HOGENOM" id="CLU_061249_0_0_4"/>
<dbReference type="UniPathway" id="UPA00359">
    <property type="reaction ID" value="UER00477"/>
</dbReference>
<dbReference type="Proteomes" id="UP000002283">
    <property type="component" value="Chromosome I"/>
</dbReference>
<dbReference type="GO" id="GO:0005737">
    <property type="term" value="C:cytoplasm"/>
    <property type="evidence" value="ECO:0007669"/>
    <property type="project" value="UniProtKB-SubCell"/>
</dbReference>
<dbReference type="GO" id="GO:0016020">
    <property type="term" value="C:membrane"/>
    <property type="evidence" value="ECO:0007669"/>
    <property type="project" value="GOC"/>
</dbReference>
<dbReference type="GO" id="GO:0008780">
    <property type="term" value="F:acyl-[acyl-carrier-protein]-UDP-N-acetylglucosamine O-acyltransferase activity"/>
    <property type="evidence" value="ECO:0007669"/>
    <property type="project" value="UniProtKB-UniRule"/>
</dbReference>
<dbReference type="GO" id="GO:0009245">
    <property type="term" value="P:lipid A biosynthetic process"/>
    <property type="evidence" value="ECO:0007669"/>
    <property type="project" value="UniProtKB-UniRule"/>
</dbReference>
<dbReference type="CDD" id="cd03351">
    <property type="entry name" value="LbH_UDP-GlcNAc_AT"/>
    <property type="match status" value="1"/>
</dbReference>
<dbReference type="Gene3D" id="2.160.10.10">
    <property type="entry name" value="Hexapeptide repeat proteins"/>
    <property type="match status" value="1"/>
</dbReference>
<dbReference type="Gene3D" id="1.20.1180.10">
    <property type="entry name" value="Udp N-acetylglucosamine O-acyltransferase, C-terminal domain"/>
    <property type="match status" value="1"/>
</dbReference>
<dbReference type="HAMAP" id="MF_00387">
    <property type="entry name" value="LpxA"/>
    <property type="match status" value="1"/>
</dbReference>
<dbReference type="InterPro" id="IPR029098">
    <property type="entry name" value="Acetyltransf_C"/>
</dbReference>
<dbReference type="InterPro" id="IPR037157">
    <property type="entry name" value="Acetyltransf_C_sf"/>
</dbReference>
<dbReference type="InterPro" id="IPR001451">
    <property type="entry name" value="Hexapep"/>
</dbReference>
<dbReference type="InterPro" id="IPR010137">
    <property type="entry name" value="Lipid_A_LpxA"/>
</dbReference>
<dbReference type="InterPro" id="IPR011004">
    <property type="entry name" value="Trimer_LpxA-like_sf"/>
</dbReference>
<dbReference type="NCBIfam" id="TIGR01852">
    <property type="entry name" value="lipid_A_lpxA"/>
    <property type="match status" value="1"/>
</dbReference>
<dbReference type="NCBIfam" id="NF003657">
    <property type="entry name" value="PRK05289.1"/>
    <property type="match status" value="1"/>
</dbReference>
<dbReference type="PANTHER" id="PTHR43480">
    <property type="entry name" value="ACYL-[ACYL-CARRIER-PROTEIN]--UDP-N-ACETYLGLUCOSAMINE O-ACYLTRANSFERASE"/>
    <property type="match status" value="1"/>
</dbReference>
<dbReference type="PANTHER" id="PTHR43480:SF1">
    <property type="entry name" value="ACYL-[ACYL-CARRIER-PROTEIN]--UDP-N-ACETYLGLUCOSAMINE O-ACYLTRANSFERASE, MITOCHONDRIAL-RELATED"/>
    <property type="match status" value="1"/>
</dbReference>
<dbReference type="Pfam" id="PF13720">
    <property type="entry name" value="Acetyltransf_11"/>
    <property type="match status" value="1"/>
</dbReference>
<dbReference type="Pfam" id="PF00132">
    <property type="entry name" value="Hexapep"/>
    <property type="match status" value="2"/>
</dbReference>
<dbReference type="PIRSF" id="PIRSF000456">
    <property type="entry name" value="UDP-GlcNAc_acltr"/>
    <property type="match status" value="1"/>
</dbReference>
<dbReference type="SUPFAM" id="SSF51161">
    <property type="entry name" value="Trimeric LpxA-like enzymes"/>
    <property type="match status" value="1"/>
</dbReference>
<dbReference type="PROSITE" id="PS00101">
    <property type="entry name" value="HEXAPEP_TRANSFERASES"/>
    <property type="match status" value="1"/>
</dbReference>
<gene>
    <name evidence="1" type="primary">lpxA</name>
    <name type="ordered locus">BMA10229_A3268</name>
</gene>
<name>LPXA_BURM9</name>
<comment type="function">
    <text evidence="1">Involved in the biosynthesis of lipid A, a phosphorylated glycolipid that anchors the lipopolysaccharide to the outer membrane of the cell.</text>
</comment>
<comment type="catalytic activity">
    <reaction evidence="1">
        <text>a (3R)-hydroxyacyl-[ACP] + UDP-N-acetyl-alpha-D-glucosamine = a UDP-3-O-[(3R)-3-hydroxyacyl]-N-acetyl-alpha-D-glucosamine + holo-[ACP]</text>
        <dbReference type="Rhea" id="RHEA:67812"/>
        <dbReference type="Rhea" id="RHEA-COMP:9685"/>
        <dbReference type="Rhea" id="RHEA-COMP:9945"/>
        <dbReference type="ChEBI" id="CHEBI:57705"/>
        <dbReference type="ChEBI" id="CHEBI:64479"/>
        <dbReference type="ChEBI" id="CHEBI:78827"/>
        <dbReference type="ChEBI" id="CHEBI:173225"/>
        <dbReference type="EC" id="2.3.1.129"/>
    </reaction>
</comment>
<comment type="pathway">
    <text evidence="1">Glycolipid biosynthesis; lipid IV(A) biosynthesis; lipid IV(A) from (3R)-3-hydroxytetradecanoyl-[acyl-carrier-protein] and UDP-N-acetyl-alpha-D-glucosamine: step 1/6.</text>
</comment>
<comment type="subunit">
    <text evidence="1">Homotrimer.</text>
</comment>
<comment type="subcellular location">
    <subcellularLocation>
        <location evidence="1">Cytoplasm</location>
    </subcellularLocation>
</comment>
<comment type="similarity">
    <text evidence="1">Belongs to the transferase hexapeptide repeat family. LpxA subfamily.</text>
</comment>
<organism>
    <name type="scientific">Burkholderia mallei (strain NCTC 10229)</name>
    <dbReference type="NCBI Taxonomy" id="412022"/>
    <lineage>
        <taxon>Bacteria</taxon>
        <taxon>Pseudomonadati</taxon>
        <taxon>Pseudomonadota</taxon>
        <taxon>Betaproteobacteria</taxon>
        <taxon>Burkholderiales</taxon>
        <taxon>Burkholderiaceae</taxon>
        <taxon>Burkholderia</taxon>
        <taxon>pseudomallei group</taxon>
    </lineage>
</organism>
<sequence>MSRIHPTAIIEPGAQLHETVEVGPYAIVGSHVTIGARTTIGSHSVIEGHTTIGEDNRIGHYASVGGRPQDMKYKDEPTRLVIGDRNTIREFTTIHTGTVQDTGVTTLGDDNWIMAYVHIGHDCRVGSHVILSSNAQMAGHVEIGDWAIVGGMSGVHQFVRIGAHSMLGGASALVQDIPPFVIAAGNKAEPHGINVEGLRRRGFSPDAISALRSAYRILYKNSLSLEEAKVQLSELAQAGGDGDAAVKSLVDFVESSQRGIIR</sequence>
<accession>A2SB85</accession>
<protein>
    <recommendedName>
        <fullName evidence="1">Acyl-[acyl-carrier-protein]--UDP-N-acetylglucosamine O-acyltransferase</fullName>
        <shortName evidence="1">UDP-N-acetylglucosamine acyltransferase</shortName>
        <ecNumber evidence="1">2.3.1.129</ecNumber>
    </recommendedName>
</protein>
<proteinExistence type="inferred from homology"/>